<sequence length="278" mass="30347">MSVPTVLQKILARKAEEVAERRARVNLAEVERLARSADAPRGFANALLERAKRKEPAVIAEIKKASPSKGVLREHFVPAEIARSYEAGGAACLSVLTDVDFFQGADAYLKEARAACALPVIRKDFMIDPYQIVEARAIGADCILLIVSALDDVLMAELAATAKSVGLDVLVEVHDGTELERALKTLDTPLVGINNRNLHTFEVSLETTLDLLPEIPRDRLVVTESGILNRADVELMEVSEVYAFLVGEAFMRADDPGLELKRLFFQERGAVVLGADPD</sequence>
<name>TRPC_PSEAE</name>
<gene>
    <name type="primary">trpC</name>
    <name type="ordered locus">PA0651</name>
</gene>
<feature type="chain" id="PRO_0000154238" description="Indole-3-glycerol phosphate synthase">
    <location>
        <begin position="1"/>
        <end position="278"/>
    </location>
</feature>
<dbReference type="EC" id="4.1.1.48"/>
<dbReference type="EMBL" id="M33814">
    <property type="protein sequence ID" value="AAA25825.1"/>
    <property type="molecule type" value="Genomic_DNA"/>
</dbReference>
<dbReference type="EMBL" id="AE004091">
    <property type="protein sequence ID" value="AAG04040.1"/>
    <property type="molecule type" value="Genomic_DNA"/>
</dbReference>
<dbReference type="PIR" id="C35114">
    <property type="entry name" value="C35114"/>
</dbReference>
<dbReference type="RefSeq" id="NP_249342.1">
    <property type="nucleotide sequence ID" value="NC_002516.2"/>
</dbReference>
<dbReference type="RefSeq" id="WP_003113174.1">
    <property type="nucleotide sequence ID" value="NZ_QZGE01000010.1"/>
</dbReference>
<dbReference type="SMR" id="P20577"/>
<dbReference type="FunCoup" id="P20577">
    <property type="interactions" value="430"/>
</dbReference>
<dbReference type="STRING" id="208964.PA0651"/>
<dbReference type="PaxDb" id="208964-PA0651"/>
<dbReference type="GeneID" id="882120"/>
<dbReference type="KEGG" id="pae:PA0651"/>
<dbReference type="PATRIC" id="fig|208964.12.peg.682"/>
<dbReference type="PseudoCAP" id="PA0651"/>
<dbReference type="HOGENOM" id="CLU_034247_2_0_6"/>
<dbReference type="InParanoid" id="P20577"/>
<dbReference type="OrthoDB" id="9804217at2"/>
<dbReference type="PhylomeDB" id="P20577"/>
<dbReference type="BioCyc" id="PAER208964:G1FZ6-656-MONOMER"/>
<dbReference type="SABIO-RK" id="P20577"/>
<dbReference type="UniPathway" id="UPA00035">
    <property type="reaction ID" value="UER00043"/>
</dbReference>
<dbReference type="Proteomes" id="UP000002438">
    <property type="component" value="Chromosome"/>
</dbReference>
<dbReference type="GO" id="GO:0004425">
    <property type="term" value="F:indole-3-glycerol-phosphate synthase activity"/>
    <property type="evidence" value="ECO:0000314"/>
    <property type="project" value="PseudoCAP"/>
</dbReference>
<dbReference type="GO" id="GO:0004640">
    <property type="term" value="F:phosphoribosylanthranilate isomerase activity"/>
    <property type="evidence" value="ECO:0000318"/>
    <property type="project" value="GO_Central"/>
</dbReference>
<dbReference type="GO" id="GO:0000162">
    <property type="term" value="P:L-tryptophan biosynthetic process"/>
    <property type="evidence" value="ECO:0000315"/>
    <property type="project" value="PseudoCAP"/>
</dbReference>
<dbReference type="CDD" id="cd00331">
    <property type="entry name" value="IGPS"/>
    <property type="match status" value="1"/>
</dbReference>
<dbReference type="FunFam" id="3.20.20.70:FF:000024">
    <property type="entry name" value="Indole-3-glycerol phosphate synthase"/>
    <property type="match status" value="1"/>
</dbReference>
<dbReference type="Gene3D" id="3.20.20.70">
    <property type="entry name" value="Aldolase class I"/>
    <property type="match status" value="1"/>
</dbReference>
<dbReference type="HAMAP" id="MF_00134_B">
    <property type="entry name" value="IGPS_B"/>
    <property type="match status" value="1"/>
</dbReference>
<dbReference type="InterPro" id="IPR013785">
    <property type="entry name" value="Aldolase_TIM"/>
</dbReference>
<dbReference type="InterPro" id="IPR045186">
    <property type="entry name" value="Indole-3-glycerol_P_synth"/>
</dbReference>
<dbReference type="InterPro" id="IPR013798">
    <property type="entry name" value="Indole-3-glycerol_P_synth_dom"/>
</dbReference>
<dbReference type="InterPro" id="IPR001468">
    <property type="entry name" value="Indole-3-GlycerolPSynthase_CS"/>
</dbReference>
<dbReference type="InterPro" id="IPR011060">
    <property type="entry name" value="RibuloseP-bd_barrel"/>
</dbReference>
<dbReference type="NCBIfam" id="NF001370">
    <property type="entry name" value="PRK00278.1-2"/>
    <property type="match status" value="1"/>
</dbReference>
<dbReference type="NCBIfam" id="NF001373">
    <property type="entry name" value="PRK00278.1-6"/>
    <property type="match status" value="1"/>
</dbReference>
<dbReference type="NCBIfam" id="NF001377">
    <property type="entry name" value="PRK00278.2-4"/>
    <property type="match status" value="1"/>
</dbReference>
<dbReference type="PANTHER" id="PTHR22854:SF2">
    <property type="entry name" value="INDOLE-3-GLYCEROL-PHOSPHATE SYNTHASE"/>
    <property type="match status" value="1"/>
</dbReference>
<dbReference type="PANTHER" id="PTHR22854">
    <property type="entry name" value="TRYPTOPHAN BIOSYNTHESIS PROTEIN"/>
    <property type="match status" value="1"/>
</dbReference>
<dbReference type="Pfam" id="PF00218">
    <property type="entry name" value="IGPS"/>
    <property type="match status" value="1"/>
</dbReference>
<dbReference type="SUPFAM" id="SSF51366">
    <property type="entry name" value="Ribulose-phoshate binding barrel"/>
    <property type="match status" value="1"/>
</dbReference>
<dbReference type="PROSITE" id="PS00614">
    <property type="entry name" value="IGPS"/>
    <property type="match status" value="1"/>
</dbReference>
<comment type="catalytic activity">
    <reaction>
        <text>1-(2-carboxyphenylamino)-1-deoxy-D-ribulose 5-phosphate + H(+) = (1S,2R)-1-C-(indol-3-yl)glycerol 3-phosphate + CO2 + H2O</text>
        <dbReference type="Rhea" id="RHEA:23476"/>
        <dbReference type="ChEBI" id="CHEBI:15377"/>
        <dbReference type="ChEBI" id="CHEBI:15378"/>
        <dbReference type="ChEBI" id="CHEBI:16526"/>
        <dbReference type="ChEBI" id="CHEBI:58613"/>
        <dbReference type="ChEBI" id="CHEBI:58866"/>
        <dbReference type="EC" id="4.1.1.48"/>
    </reaction>
</comment>
<comment type="pathway">
    <text>Amino-acid biosynthesis; L-tryptophan biosynthesis; L-tryptophan from chorismate: step 4/5.</text>
</comment>
<comment type="similarity">
    <text evidence="1">Belongs to the TrpC family.</text>
</comment>
<evidence type="ECO:0000305" key="1"/>
<keyword id="KW-0028">Amino-acid biosynthesis</keyword>
<keyword id="KW-0057">Aromatic amino acid biosynthesis</keyword>
<keyword id="KW-0210">Decarboxylase</keyword>
<keyword id="KW-0456">Lyase</keyword>
<keyword id="KW-1185">Reference proteome</keyword>
<keyword id="KW-0822">Tryptophan biosynthesis</keyword>
<reference key="1">
    <citation type="journal article" date="1990" name="J. Bacteriol.">
        <title>DNA sequences and characterization of four early genes of the tryptophan pathway in Pseudomonas aeruginosa.</title>
        <authorList>
            <person name="Essar D.W."/>
            <person name="Eberly L."/>
            <person name="Han C.Y."/>
            <person name="Crawford I.P."/>
        </authorList>
    </citation>
    <scope>NUCLEOTIDE SEQUENCE [GENOMIC DNA]</scope>
</reference>
<reference key="2">
    <citation type="journal article" date="2000" name="Nature">
        <title>Complete genome sequence of Pseudomonas aeruginosa PAO1, an opportunistic pathogen.</title>
        <authorList>
            <person name="Stover C.K."/>
            <person name="Pham X.-Q.T."/>
            <person name="Erwin A.L."/>
            <person name="Mizoguchi S.D."/>
            <person name="Warrener P."/>
            <person name="Hickey M.J."/>
            <person name="Brinkman F.S.L."/>
            <person name="Hufnagle W.O."/>
            <person name="Kowalik D.J."/>
            <person name="Lagrou M."/>
            <person name="Garber R.L."/>
            <person name="Goltry L."/>
            <person name="Tolentino E."/>
            <person name="Westbrock-Wadman S."/>
            <person name="Yuan Y."/>
            <person name="Brody L.L."/>
            <person name="Coulter S.N."/>
            <person name="Folger K.R."/>
            <person name="Kas A."/>
            <person name="Larbig K."/>
            <person name="Lim R.M."/>
            <person name="Smith K.A."/>
            <person name="Spencer D.H."/>
            <person name="Wong G.K.-S."/>
            <person name="Wu Z."/>
            <person name="Paulsen I.T."/>
            <person name="Reizer J."/>
            <person name="Saier M.H. Jr."/>
            <person name="Hancock R.E.W."/>
            <person name="Lory S."/>
            <person name="Olson M.V."/>
        </authorList>
    </citation>
    <scope>NUCLEOTIDE SEQUENCE [LARGE SCALE GENOMIC DNA]</scope>
    <source>
        <strain>ATCC 15692 / DSM 22644 / CIP 104116 / JCM 14847 / LMG 12228 / 1C / PRS 101 / PAO1</strain>
    </source>
</reference>
<reference key="3">
    <citation type="journal article" date="1994" name="J. Bacteriol.">
        <title>The vfr gene product, required for Pseudomonas aeruginosa exotoxin A and protease production, belongs to the cyclic AMP receptor protein family.</title>
        <authorList>
            <person name="West S.E.H."/>
            <person name="Sample A.K."/>
            <person name="Runyen-Janecky L.J."/>
        </authorList>
    </citation>
    <scope>NUCLEOTIDE SEQUENCE [GENOMIC DNA] OF 258-278</scope>
    <source>
        <strain>ATCC 15692 / DSM 22644 / CIP 104116 / JCM 14847 / LMG 12228 / 1C / PRS 101 / PAO1</strain>
    </source>
</reference>
<accession>P20577</accession>
<organism>
    <name type="scientific">Pseudomonas aeruginosa (strain ATCC 15692 / DSM 22644 / CIP 104116 / JCM 14847 / LMG 12228 / 1C / PRS 101 / PAO1)</name>
    <dbReference type="NCBI Taxonomy" id="208964"/>
    <lineage>
        <taxon>Bacteria</taxon>
        <taxon>Pseudomonadati</taxon>
        <taxon>Pseudomonadota</taxon>
        <taxon>Gammaproteobacteria</taxon>
        <taxon>Pseudomonadales</taxon>
        <taxon>Pseudomonadaceae</taxon>
        <taxon>Pseudomonas</taxon>
    </lineage>
</organism>
<protein>
    <recommendedName>
        <fullName>Indole-3-glycerol phosphate synthase</fullName>
        <shortName>IGPS</shortName>
        <ecNumber>4.1.1.48</ecNumber>
    </recommendedName>
</protein>
<proteinExistence type="inferred from homology"/>